<feature type="chain" id="PRO_0000269516" description="3-hexulose-6-phosphate synthase">
    <location>
        <begin position="1"/>
        <end position="210"/>
    </location>
</feature>
<evidence type="ECO:0000250" key="1"/>
<evidence type="ECO:0000305" key="2"/>
<dbReference type="EC" id="4.1.2.43"/>
<dbReference type="EMBL" id="CP000253">
    <property type="protein sequence ID" value="ABD29700.1"/>
    <property type="molecule type" value="Genomic_DNA"/>
</dbReference>
<dbReference type="RefSeq" id="YP_499125.1">
    <property type="nucleotide sequence ID" value="NC_007795.1"/>
</dbReference>
<dbReference type="SMR" id="Q2G0K7"/>
<dbReference type="STRING" id="93061.SAOUHSC_00553"/>
<dbReference type="PaxDb" id="1280-SAXN108_0627"/>
<dbReference type="GeneID" id="3920832"/>
<dbReference type="KEGG" id="sao:SAOUHSC_00553"/>
<dbReference type="PATRIC" id="fig|93061.5.peg.498"/>
<dbReference type="eggNOG" id="COG0269">
    <property type="taxonomic scope" value="Bacteria"/>
</dbReference>
<dbReference type="HOGENOM" id="CLU_081825_1_0_9"/>
<dbReference type="OrthoDB" id="43475at2"/>
<dbReference type="UniPathway" id="UPA00294">
    <property type="reaction ID" value="UER00434"/>
</dbReference>
<dbReference type="PRO" id="PR:Q2G0K7"/>
<dbReference type="Proteomes" id="UP000008816">
    <property type="component" value="Chromosome"/>
</dbReference>
<dbReference type="GO" id="GO:0033982">
    <property type="term" value="F:3-dehydro-L-gulonate-6-phosphate decarboxylase activity"/>
    <property type="evidence" value="ECO:0000318"/>
    <property type="project" value="GO_Central"/>
</dbReference>
<dbReference type="GO" id="GO:0043801">
    <property type="term" value="F:hexulose-6-phosphate synthase activity"/>
    <property type="evidence" value="ECO:0007669"/>
    <property type="project" value="UniProtKB-EC"/>
</dbReference>
<dbReference type="GO" id="GO:0004590">
    <property type="term" value="F:orotidine-5'-phosphate decarboxylase activity"/>
    <property type="evidence" value="ECO:0007669"/>
    <property type="project" value="InterPro"/>
</dbReference>
<dbReference type="GO" id="GO:0006207">
    <property type="term" value="P:'de novo' pyrimidine nucleobase biosynthetic process"/>
    <property type="evidence" value="ECO:0007669"/>
    <property type="project" value="InterPro"/>
</dbReference>
<dbReference type="GO" id="GO:0019647">
    <property type="term" value="P:formaldehyde assimilation via ribulose monophosphate cycle"/>
    <property type="evidence" value="ECO:0007669"/>
    <property type="project" value="UniProtKB-UniPathway"/>
</dbReference>
<dbReference type="GO" id="GO:0019854">
    <property type="term" value="P:L-ascorbic acid catabolic process"/>
    <property type="evidence" value="ECO:0000318"/>
    <property type="project" value="GO_Central"/>
</dbReference>
<dbReference type="GO" id="GO:0006730">
    <property type="term" value="P:one-carbon metabolic process"/>
    <property type="evidence" value="ECO:0007669"/>
    <property type="project" value="UniProtKB-KW"/>
</dbReference>
<dbReference type="CDD" id="cd04726">
    <property type="entry name" value="KGPDC_HPS"/>
    <property type="match status" value="1"/>
</dbReference>
<dbReference type="FunFam" id="3.20.20.70:FF:000022">
    <property type="entry name" value="3-keto-L-gulonate-6-phosphate decarboxylase UlaD"/>
    <property type="match status" value="1"/>
</dbReference>
<dbReference type="Gene3D" id="3.20.20.70">
    <property type="entry name" value="Aldolase class I"/>
    <property type="match status" value="1"/>
</dbReference>
<dbReference type="InterPro" id="IPR017553">
    <property type="entry name" value="3-hexulose-6-phosphate_synth"/>
</dbReference>
<dbReference type="InterPro" id="IPR013785">
    <property type="entry name" value="Aldolase_TIM"/>
</dbReference>
<dbReference type="InterPro" id="IPR041710">
    <property type="entry name" value="HPS/KGPDC"/>
</dbReference>
<dbReference type="InterPro" id="IPR001754">
    <property type="entry name" value="OMPdeCOase_dom"/>
</dbReference>
<dbReference type="InterPro" id="IPR011060">
    <property type="entry name" value="RibuloseP-bd_barrel"/>
</dbReference>
<dbReference type="NCBIfam" id="TIGR03128">
    <property type="entry name" value="RuMP_HxlA"/>
    <property type="match status" value="1"/>
</dbReference>
<dbReference type="PANTHER" id="PTHR35039">
    <property type="entry name" value="3-KETO-L-GULONATE-6-PHOSPHATE DECARBOXYLASE SGBH-RELATED"/>
    <property type="match status" value="1"/>
</dbReference>
<dbReference type="PANTHER" id="PTHR35039:SF3">
    <property type="entry name" value="3-KETO-L-GULONATE-6-PHOSPHATE DECARBOXYLASE SGBH-RELATED"/>
    <property type="match status" value="1"/>
</dbReference>
<dbReference type="Pfam" id="PF00215">
    <property type="entry name" value="OMPdecase"/>
    <property type="match status" value="1"/>
</dbReference>
<dbReference type="SMART" id="SM00934">
    <property type="entry name" value="OMPdecase"/>
    <property type="match status" value="1"/>
</dbReference>
<dbReference type="SUPFAM" id="SSF51366">
    <property type="entry name" value="Ribulose-phoshate binding barrel"/>
    <property type="match status" value="1"/>
</dbReference>
<gene>
    <name type="ordered locus">SAOUHSC_00553</name>
</gene>
<comment type="function">
    <text evidence="1">Catalyzes the condensation of ribulose 5-phosphate with formaldehyde to form 3-hexulose 6-phosphate.</text>
</comment>
<comment type="catalytic activity">
    <reaction>
        <text>D-ribulose 5-phosphate + formaldehyde = D-arabino-hex-3-ulose 6-phosphate</text>
        <dbReference type="Rhea" id="RHEA:25201"/>
        <dbReference type="ChEBI" id="CHEBI:16842"/>
        <dbReference type="ChEBI" id="CHEBI:58121"/>
        <dbReference type="ChEBI" id="CHEBI:58542"/>
        <dbReference type="EC" id="4.1.2.43"/>
    </reaction>
</comment>
<comment type="pathway">
    <text>One-carbon metabolism; formaldehyde assimilation via RuMP pathway; D-fructose 6-phosphate from D-ribulose 5-phosphate and formaldehyde: step 1/2.</text>
</comment>
<comment type="similarity">
    <text evidence="2">Belongs to the HPS/KGPDC family. HPS subfamily.</text>
</comment>
<protein>
    <recommendedName>
        <fullName>3-hexulose-6-phosphate synthase</fullName>
        <shortName>HPS</shortName>
        <ecNumber>4.1.2.43</ecNumber>
    </recommendedName>
    <alternativeName>
        <fullName>D-arabino-3-hexulose-6-phosphate formaldehyde lyase</fullName>
    </alternativeName>
</protein>
<proteinExistence type="inferred from homology"/>
<accession>Q2G0K7</accession>
<organism>
    <name type="scientific">Staphylococcus aureus (strain NCTC 8325 / PS 47)</name>
    <dbReference type="NCBI Taxonomy" id="93061"/>
    <lineage>
        <taxon>Bacteria</taxon>
        <taxon>Bacillati</taxon>
        <taxon>Bacillota</taxon>
        <taxon>Bacilli</taxon>
        <taxon>Bacillales</taxon>
        <taxon>Staphylococcaceae</taxon>
        <taxon>Staphylococcus</taxon>
    </lineage>
</organism>
<reference key="1">
    <citation type="book" date="2006" name="Gram positive pathogens, 2nd edition">
        <title>The Staphylococcus aureus NCTC 8325 genome.</title>
        <editorList>
            <person name="Fischetti V."/>
            <person name="Novick R."/>
            <person name="Ferretti J."/>
            <person name="Portnoy D."/>
            <person name="Rood J."/>
        </editorList>
        <authorList>
            <person name="Gillaspy A.F."/>
            <person name="Worrell V."/>
            <person name="Orvis J."/>
            <person name="Roe B.A."/>
            <person name="Dyer D.W."/>
            <person name="Iandolo J.J."/>
        </authorList>
    </citation>
    <scope>NUCLEOTIDE SEQUENCE [LARGE SCALE GENOMIC DNA]</scope>
    <source>
        <strain>NCTC 8325 / PS 47</strain>
    </source>
</reference>
<keyword id="KW-0119">Carbohydrate metabolism</keyword>
<keyword id="KW-0456">Lyase</keyword>
<keyword id="KW-0554">One-carbon metabolism</keyword>
<keyword id="KW-1185">Reference proteome</keyword>
<sequence length="210" mass="22436">MELQLAIDLLNKEDAAELANKVKDYVDIVEIGTPIIYNEGLPAVKHMADNISNVKVLADMKIMDAADYEVSQAIKFGADVITILGVAEDASIKAAIEEAHKNNKQLLVDMIAVQDLEKRAKELDEMGADYIAVHTGYDLQAEGQSPLESLRTVKSVIKNSKVAVAGGIKPDTIKDIVAESPDLVIVGGGIANADDPVEAAKQCRAAIEGK</sequence>
<name>HPS_STAA8</name>